<reference key="1">
    <citation type="journal article" date="2009" name="J. Bacteriol.">
        <title>Genome sequences of three Agrobacterium biovars help elucidate the evolution of multichromosome genomes in bacteria.</title>
        <authorList>
            <person name="Slater S.C."/>
            <person name="Goldman B.S."/>
            <person name="Goodner B."/>
            <person name="Setubal J.C."/>
            <person name="Farrand S.K."/>
            <person name="Nester E.W."/>
            <person name="Burr T.J."/>
            <person name="Banta L."/>
            <person name="Dickerman A.W."/>
            <person name="Paulsen I."/>
            <person name="Otten L."/>
            <person name="Suen G."/>
            <person name="Welch R."/>
            <person name="Almeida N.F."/>
            <person name="Arnold F."/>
            <person name="Burton O.T."/>
            <person name="Du Z."/>
            <person name="Ewing A."/>
            <person name="Godsy E."/>
            <person name="Heisel S."/>
            <person name="Houmiel K.L."/>
            <person name="Jhaveri J."/>
            <person name="Lu J."/>
            <person name="Miller N.M."/>
            <person name="Norton S."/>
            <person name="Chen Q."/>
            <person name="Phoolcharoen W."/>
            <person name="Ohlin V."/>
            <person name="Ondrusek D."/>
            <person name="Pride N."/>
            <person name="Stricklin S.L."/>
            <person name="Sun J."/>
            <person name="Wheeler C."/>
            <person name="Wilson L."/>
            <person name="Zhu H."/>
            <person name="Wood D.W."/>
        </authorList>
    </citation>
    <scope>NUCLEOTIDE SEQUENCE [LARGE SCALE GENOMIC DNA]</scope>
    <source>
        <strain>K84 / ATCC BAA-868</strain>
    </source>
</reference>
<evidence type="ECO:0000255" key="1">
    <source>
        <dbReference type="HAMAP-Rule" id="MF_00560"/>
    </source>
</evidence>
<organism>
    <name type="scientific">Rhizobium rhizogenes (strain K84 / ATCC BAA-868)</name>
    <name type="common">Agrobacterium radiobacter</name>
    <dbReference type="NCBI Taxonomy" id="311403"/>
    <lineage>
        <taxon>Bacteria</taxon>
        <taxon>Pseudomonadati</taxon>
        <taxon>Pseudomonadota</taxon>
        <taxon>Alphaproteobacteria</taxon>
        <taxon>Hyphomicrobiales</taxon>
        <taxon>Rhizobiaceae</taxon>
        <taxon>Rhizobium/Agrobacterium group</taxon>
        <taxon>Rhizobium</taxon>
    </lineage>
</organism>
<feature type="chain" id="PRO_1000196652" description="Trans-aconitate 2-methyltransferase">
    <location>
        <begin position="1"/>
        <end position="256"/>
    </location>
</feature>
<protein>
    <recommendedName>
        <fullName evidence="1">Trans-aconitate 2-methyltransferase</fullName>
        <ecNumber evidence="1">2.1.1.144</ecNumber>
    </recommendedName>
</protein>
<accession>B9JBE6</accession>
<gene>
    <name evidence="1" type="primary">tam</name>
    <name type="ordered locus">Arad_1405</name>
</gene>
<proteinExistence type="inferred from homology"/>
<keyword id="KW-0963">Cytoplasm</keyword>
<keyword id="KW-0489">Methyltransferase</keyword>
<keyword id="KW-0949">S-adenosyl-L-methionine</keyword>
<keyword id="KW-0808">Transferase</keyword>
<comment type="function">
    <text evidence="1">Catalyzes the S-adenosylmethionine monomethyl esterification of trans-aconitate.</text>
</comment>
<comment type="catalytic activity">
    <reaction evidence="1">
        <text>trans-aconitate + S-adenosyl-L-methionine = (E)-3-(methoxycarbonyl)pent-2-enedioate + S-adenosyl-L-homocysteine</text>
        <dbReference type="Rhea" id="RHEA:14969"/>
        <dbReference type="ChEBI" id="CHEBI:15708"/>
        <dbReference type="ChEBI" id="CHEBI:57470"/>
        <dbReference type="ChEBI" id="CHEBI:57856"/>
        <dbReference type="ChEBI" id="CHEBI:59789"/>
        <dbReference type="EC" id="2.1.1.144"/>
    </reaction>
</comment>
<comment type="subcellular location">
    <subcellularLocation>
        <location evidence="1">Cytoplasm</location>
    </subcellularLocation>
</comment>
<comment type="similarity">
    <text evidence="1">Belongs to the methyltransferase superfamily. Tam family.</text>
</comment>
<name>TAM_RHIR8</name>
<dbReference type="EC" id="2.1.1.144" evidence="1"/>
<dbReference type="EMBL" id="CP000628">
    <property type="protein sequence ID" value="ACM25852.1"/>
    <property type="molecule type" value="Genomic_DNA"/>
</dbReference>
<dbReference type="RefSeq" id="WP_007699465.1">
    <property type="nucleotide sequence ID" value="NC_011985.1"/>
</dbReference>
<dbReference type="SMR" id="B9JBE6"/>
<dbReference type="STRING" id="311403.Arad_1405"/>
<dbReference type="KEGG" id="ara:Arad_1405"/>
<dbReference type="eggNOG" id="COG4106">
    <property type="taxonomic scope" value="Bacteria"/>
</dbReference>
<dbReference type="HOGENOM" id="CLU_037990_5_2_5"/>
<dbReference type="Proteomes" id="UP000001600">
    <property type="component" value="Chromosome 1"/>
</dbReference>
<dbReference type="GO" id="GO:0005737">
    <property type="term" value="C:cytoplasm"/>
    <property type="evidence" value="ECO:0007669"/>
    <property type="project" value="UniProtKB-SubCell"/>
</dbReference>
<dbReference type="GO" id="GO:0030798">
    <property type="term" value="F:trans-aconitate 2-methyltransferase activity"/>
    <property type="evidence" value="ECO:0007669"/>
    <property type="project" value="UniProtKB-UniRule"/>
</dbReference>
<dbReference type="GO" id="GO:0032259">
    <property type="term" value="P:methylation"/>
    <property type="evidence" value="ECO:0007669"/>
    <property type="project" value="UniProtKB-KW"/>
</dbReference>
<dbReference type="CDD" id="cd02440">
    <property type="entry name" value="AdoMet_MTases"/>
    <property type="match status" value="1"/>
</dbReference>
<dbReference type="Gene3D" id="1.10.150.290">
    <property type="entry name" value="S-adenosyl-L-methionine-dependent methyltransferases"/>
    <property type="match status" value="1"/>
</dbReference>
<dbReference type="Gene3D" id="3.40.50.150">
    <property type="entry name" value="Vaccinia Virus protein VP39"/>
    <property type="match status" value="1"/>
</dbReference>
<dbReference type="HAMAP" id="MF_00560">
    <property type="entry name" value="Tran_acon_Me_trans"/>
    <property type="match status" value="1"/>
</dbReference>
<dbReference type="InterPro" id="IPR013216">
    <property type="entry name" value="Methyltransf_11"/>
</dbReference>
<dbReference type="InterPro" id="IPR029063">
    <property type="entry name" value="SAM-dependent_MTases_sf"/>
</dbReference>
<dbReference type="InterPro" id="IPR023506">
    <property type="entry name" value="Trans-aconitate_MeTrfase"/>
</dbReference>
<dbReference type="InterPro" id="IPR023149">
    <property type="entry name" value="Trans_acon_MeTrfase_C"/>
</dbReference>
<dbReference type="NCBIfam" id="NF002463">
    <property type="entry name" value="PRK01683.1"/>
    <property type="match status" value="1"/>
</dbReference>
<dbReference type="PANTHER" id="PTHR43861:SF1">
    <property type="entry name" value="TRANS-ACONITATE 2-METHYLTRANSFERASE"/>
    <property type="match status" value="1"/>
</dbReference>
<dbReference type="PANTHER" id="PTHR43861">
    <property type="entry name" value="TRANS-ACONITATE 2-METHYLTRANSFERASE-RELATED"/>
    <property type="match status" value="1"/>
</dbReference>
<dbReference type="Pfam" id="PF08241">
    <property type="entry name" value="Methyltransf_11"/>
    <property type="match status" value="1"/>
</dbReference>
<dbReference type="SUPFAM" id="SSF53335">
    <property type="entry name" value="S-adenosyl-L-methionine-dependent methyltransferases"/>
    <property type="match status" value="1"/>
</dbReference>
<sequence>MAWSAGQYVKFEDERTRPARDLLAQVPLTRIDRAIDLGCGPGNSTELIVERYGVAGVSGLDSDDNMLEAARARMPGTDFVKADLATWLPDEPVDLLFANAVFQWLPNHLEIFDRLMDGLKSGGVLAIQMPDNLTEPSHLMMEETAKNGPWSDAFAKKSVRRNPLPAPSVYYNRLIGKSARIDLWHTNYNHALENAAAIVEWVKATGLRPYLDHAGAEHRDAFTADYLARIEKAYPPLTDGKVLLRFPRLFLVAVKK</sequence>